<organism>
    <name type="scientific">Solidesulfovibrio magneticus (strain ATCC 700980 / DSM 13731 / RS-1)</name>
    <name type="common">Desulfovibrio magneticus</name>
    <dbReference type="NCBI Taxonomy" id="573370"/>
    <lineage>
        <taxon>Bacteria</taxon>
        <taxon>Pseudomonadati</taxon>
        <taxon>Thermodesulfobacteriota</taxon>
        <taxon>Desulfovibrionia</taxon>
        <taxon>Desulfovibrionales</taxon>
        <taxon>Desulfovibrionaceae</taxon>
        <taxon>Solidesulfovibrio</taxon>
    </lineage>
</organism>
<accession>C4XL87</accession>
<gene>
    <name evidence="1" type="primary">hcp</name>
    <name type="ordered locus">DMR_35370</name>
</gene>
<feature type="chain" id="PRO_1000202435" description="Hydroxylamine reductase">
    <location>
        <begin position="1"/>
        <end position="538"/>
    </location>
</feature>
<feature type="binding site" evidence="1">
    <location>
        <position position="3"/>
    </location>
    <ligand>
        <name>[4Fe-4S] cluster</name>
        <dbReference type="ChEBI" id="CHEBI:49883"/>
    </ligand>
</feature>
<feature type="binding site" evidence="1">
    <location>
        <position position="6"/>
    </location>
    <ligand>
        <name>[4Fe-4S] cluster</name>
        <dbReference type="ChEBI" id="CHEBI:49883"/>
    </ligand>
</feature>
<feature type="binding site" evidence="1">
    <location>
        <position position="15"/>
    </location>
    <ligand>
        <name>[4Fe-4S] cluster</name>
        <dbReference type="ChEBI" id="CHEBI:49883"/>
    </ligand>
</feature>
<feature type="binding site" evidence="1">
    <location>
        <position position="21"/>
    </location>
    <ligand>
        <name>[4Fe-4S] cluster</name>
        <dbReference type="ChEBI" id="CHEBI:49883"/>
    </ligand>
</feature>
<feature type="binding site" evidence="1">
    <location>
        <position position="239"/>
    </location>
    <ligand>
        <name>hybrid [4Fe-2O-2S] cluster</name>
        <dbReference type="ChEBI" id="CHEBI:60519"/>
    </ligand>
</feature>
<feature type="binding site" evidence="1">
    <location>
        <position position="263"/>
    </location>
    <ligand>
        <name>hybrid [4Fe-2O-2S] cluster</name>
        <dbReference type="ChEBI" id="CHEBI:60519"/>
    </ligand>
</feature>
<feature type="binding site" evidence="1">
    <location>
        <position position="307"/>
    </location>
    <ligand>
        <name>hybrid [4Fe-2O-2S] cluster</name>
        <dbReference type="ChEBI" id="CHEBI:60519"/>
    </ligand>
</feature>
<feature type="binding site" description="via persulfide group" evidence="1">
    <location>
        <position position="394"/>
    </location>
    <ligand>
        <name>hybrid [4Fe-2O-2S] cluster</name>
        <dbReference type="ChEBI" id="CHEBI:60519"/>
    </ligand>
</feature>
<feature type="binding site" evidence="1">
    <location>
        <position position="422"/>
    </location>
    <ligand>
        <name>hybrid [4Fe-2O-2S] cluster</name>
        <dbReference type="ChEBI" id="CHEBI:60519"/>
    </ligand>
</feature>
<feature type="binding site" evidence="1">
    <location>
        <position position="447"/>
    </location>
    <ligand>
        <name>hybrid [4Fe-2O-2S] cluster</name>
        <dbReference type="ChEBI" id="CHEBI:60519"/>
    </ligand>
</feature>
<feature type="binding site" evidence="1">
    <location>
        <position position="481"/>
    </location>
    <ligand>
        <name>hybrid [4Fe-2O-2S] cluster</name>
        <dbReference type="ChEBI" id="CHEBI:60519"/>
    </ligand>
</feature>
<feature type="binding site" evidence="1">
    <location>
        <position position="483"/>
    </location>
    <ligand>
        <name>hybrid [4Fe-2O-2S] cluster</name>
        <dbReference type="ChEBI" id="CHEBI:60519"/>
    </ligand>
</feature>
<feature type="modified residue" description="Cysteine persulfide" evidence="1">
    <location>
        <position position="394"/>
    </location>
</feature>
<sequence>MFCYQCEQTAKGLGCDKIGVCGKQPDVSDLQDLLVYALTGLAQAAVAAKAEGVAVPLETGRYFAKAMFSTLTNVNFDAADFVPLINEAVAKRKALAALIKAQLPEGPASYVPALDLAGLIAQGHIHGLKDIPETNDDIRSLKHTLIFGIKGIAAYADHAAILGQEDPAVYEFLYEGMAATFTTDKDLGAWVALVLKCGEVNLRAMELLDAANTGAYGHPVPTVVPLGHKAGKAILVSGHDLKDLKQLLEQTAGKGINIYTHGEMLPAHGYPELKKYPHFHGHYGTAWQNQHKEFAAFPGAILMTTNCIQKPAESYLGSIFTTGLVGWPGAVHVKNGEFGPVIEKALAMPGFAADEDKGTVMTGFARNAVMSVAGTVIDAVKAGKIRHFFLVAGCDGAKPGRNYYTEFVEKAPADTIVLTLACGKFRFFDKQLGDIGGIPRLLDMGQCNDAYSAIQVAVALAGAFNCGVNDLPLSMVLSWYEQKAVAILLTLLHLGVKNIRLGPSLPAFLTPNVLNFLVANYDIKPISTPDEDLKAILG</sequence>
<evidence type="ECO:0000255" key="1">
    <source>
        <dbReference type="HAMAP-Rule" id="MF_00069"/>
    </source>
</evidence>
<keyword id="KW-0004">4Fe-4S</keyword>
<keyword id="KW-0963">Cytoplasm</keyword>
<keyword id="KW-0408">Iron</keyword>
<keyword id="KW-0411">Iron-sulfur</keyword>
<keyword id="KW-0479">Metal-binding</keyword>
<keyword id="KW-0560">Oxidoreductase</keyword>
<comment type="function">
    <text evidence="1">Catalyzes the reduction of hydroxylamine to form NH(3) and H(2)O.</text>
</comment>
<comment type="catalytic activity">
    <reaction evidence="1">
        <text>A + NH4(+) + H2O = hydroxylamine + AH2 + H(+)</text>
        <dbReference type="Rhea" id="RHEA:22052"/>
        <dbReference type="ChEBI" id="CHEBI:13193"/>
        <dbReference type="ChEBI" id="CHEBI:15377"/>
        <dbReference type="ChEBI" id="CHEBI:15378"/>
        <dbReference type="ChEBI" id="CHEBI:15429"/>
        <dbReference type="ChEBI" id="CHEBI:17499"/>
        <dbReference type="ChEBI" id="CHEBI:28938"/>
        <dbReference type="EC" id="1.7.99.1"/>
    </reaction>
</comment>
<comment type="cofactor">
    <cofactor evidence="1">
        <name>[4Fe-4S] cluster</name>
        <dbReference type="ChEBI" id="CHEBI:49883"/>
    </cofactor>
    <text evidence="1">Binds 1 [4Fe-4S] cluster.</text>
</comment>
<comment type="cofactor">
    <cofactor evidence="1">
        <name>hybrid [4Fe-2O-2S] cluster</name>
        <dbReference type="ChEBI" id="CHEBI:60519"/>
    </cofactor>
    <text evidence="1">Binds 1 hybrid [4Fe-2O-2S] cluster.</text>
</comment>
<comment type="subcellular location">
    <subcellularLocation>
        <location evidence="1">Cytoplasm</location>
    </subcellularLocation>
</comment>
<comment type="similarity">
    <text evidence="1">Belongs to the HCP family.</text>
</comment>
<name>HCP_SOLM1</name>
<proteinExistence type="inferred from homology"/>
<dbReference type="EC" id="1.7.99.1" evidence="1"/>
<dbReference type="EMBL" id="AP010904">
    <property type="protein sequence ID" value="BAH77028.1"/>
    <property type="molecule type" value="Genomic_DNA"/>
</dbReference>
<dbReference type="RefSeq" id="WP_015862173.1">
    <property type="nucleotide sequence ID" value="NC_012796.1"/>
</dbReference>
<dbReference type="SMR" id="C4XL87"/>
<dbReference type="STRING" id="573370.DMR_35370"/>
<dbReference type="KEGG" id="dma:DMR_35370"/>
<dbReference type="eggNOG" id="COG1151">
    <property type="taxonomic scope" value="Bacteria"/>
</dbReference>
<dbReference type="HOGENOM" id="CLU_038344_2_0_7"/>
<dbReference type="OrthoDB" id="9761526at2"/>
<dbReference type="Proteomes" id="UP000009071">
    <property type="component" value="Chromosome"/>
</dbReference>
<dbReference type="GO" id="GO:0005737">
    <property type="term" value="C:cytoplasm"/>
    <property type="evidence" value="ECO:0007669"/>
    <property type="project" value="UniProtKB-SubCell"/>
</dbReference>
<dbReference type="GO" id="GO:0051539">
    <property type="term" value="F:4 iron, 4 sulfur cluster binding"/>
    <property type="evidence" value="ECO:0007669"/>
    <property type="project" value="UniProtKB-KW"/>
</dbReference>
<dbReference type="GO" id="GO:0050418">
    <property type="term" value="F:hydroxylamine reductase activity"/>
    <property type="evidence" value="ECO:0007669"/>
    <property type="project" value="UniProtKB-UniRule"/>
</dbReference>
<dbReference type="GO" id="GO:0046872">
    <property type="term" value="F:metal ion binding"/>
    <property type="evidence" value="ECO:0007669"/>
    <property type="project" value="UniProtKB-KW"/>
</dbReference>
<dbReference type="GO" id="GO:0004601">
    <property type="term" value="F:peroxidase activity"/>
    <property type="evidence" value="ECO:0007669"/>
    <property type="project" value="TreeGrafter"/>
</dbReference>
<dbReference type="GO" id="GO:0042542">
    <property type="term" value="P:response to hydrogen peroxide"/>
    <property type="evidence" value="ECO:0007669"/>
    <property type="project" value="TreeGrafter"/>
</dbReference>
<dbReference type="CDD" id="cd01914">
    <property type="entry name" value="HCP"/>
    <property type="match status" value="1"/>
</dbReference>
<dbReference type="FunFam" id="1.20.1270.20:FF:000001">
    <property type="entry name" value="Hydroxylamine reductase"/>
    <property type="match status" value="1"/>
</dbReference>
<dbReference type="FunFam" id="3.40.50.2030:FF:000001">
    <property type="entry name" value="Hydroxylamine reductase"/>
    <property type="match status" value="1"/>
</dbReference>
<dbReference type="FunFam" id="3.40.50.2030:FF:000002">
    <property type="entry name" value="Hydroxylamine reductase"/>
    <property type="match status" value="1"/>
</dbReference>
<dbReference type="Gene3D" id="1.20.1270.20">
    <property type="match status" value="2"/>
</dbReference>
<dbReference type="Gene3D" id="3.40.50.2030">
    <property type="match status" value="2"/>
</dbReference>
<dbReference type="HAMAP" id="MF_00069">
    <property type="entry name" value="Hydroxylam_reduct"/>
    <property type="match status" value="1"/>
</dbReference>
<dbReference type="InterPro" id="IPR004137">
    <property type="entry name" value="HCP/CODH"/>
</dbReference>
<dbReference type="InterPro" id="IPR010048">
    <property type="entry name" value="Hydroxylam_reduct"/>
</dbReference>
<dbReference type="InterPro" id="IPR016099">
    <property type="entry name" value="Prismane-like_a/b-sand"/>
</dbReference>
<dbReference type="InterPro" id="IPR011254">
    <property type="entry name" value="Prismane-like_sf"/>
</dbReference>
<dbReference type="InterPro" id="IPR016100">
    <property type="entry name" value="Prismane_a-bundle"/>
</dbReference>
<dbReference type="NCBIfam" id="TIGR01703">
    <property type="entry name" value="hybrid_clust"/>
    <property type="match status" value="1"/>
</dbReference>
<dbReference type="NCBIfam" id="NF003658">
    <property type="entry name" value="PRK05290.1"/>
    <property type="match status" value="1"/>
</dbReference>
<dbReference type="PANTHER" id="PTHR30109">
    <property type="entry name" value="HYDROXYLAMINE REDUCTASE"/>
    <property type="match status" value="1"/>
</dbReference>
<dbReference type="PANTHER" id="PTHR30109:SF0">
    <property type="entry name" value="HYDROXYLAMINE REDUCTASE"/>
    <property type="match status" value="1"/>
</dbReference>
<dbReference type="Pfam" id="PF03063">
    <property type="entry name" value="Prismane"/>
    <property type="match status" value="1"/>
</dbReference>
<dbReference type="PIRSF" id="PIRSF000076">
    <property type="entry name" value="HCP"/>
    <property type="match status" value="1"/>
</dbReference>
<dbReference type="SUPFAM" id="SSF56821">
    <property type="entry name" value="Prismane protein-like"/>
    <property type="match status" value="1"/>
</dbReference>
<protein>
    <recommendedName>
        <fullName evidence="1">Hydroxylamine reductase</fullName>
        <ecNumber evidence="1">1.7.99.1</ecNumber>
    </recommendedName>
    <alternativeName>
        <fullName evidence="1">Hybrid-cluster protein</fullName>
        <shortName evidence="1">HCP</shortName>
    </alternativeName>
    <alternativeName>
        <fullName evidence="1">Prismane protein</fullName>
    </alternativeName>
</protein>
<reference key="1">
    <citation type="journal article" date="2009" name="Genome Res.">
        <title>Whole genome sequence of Desulfovibrio magneticus strain RS-1 revealed common gene clusters in magnetotactic bacteria.</title>
        <authorList>
            <person name="Nakazawa H."/>
            <person name="Arakaki A."/>
            <person name="Narita-Yamada S."/>
            <person name="Yashiro I."/>
            <person name="Jinno K."/>
            <person name="Aoki N."/>
            <person name="Tsuruyama A."/>
            <person name="Okamura Y."/>
            <person name="Tanikawa S."/>
            <person name="Fujita N."/>
            <person name="Takeyama H."/>
            <person name="Matsunaga T."/>
        </authorList>
    </citation>
    <scope>NUCLEOTIDE SEQUENCE [LARGE SCALE GENOMIC DNA]</scope>
    <source>
        <strain>ATCC 700980 / DSM 13731 / RS-1</strain>
    </source>
</reference>